<comment type="function">
    <text evidence="1">Catalyzes the dephosphorylation of undecaprenyl diphosphate (UPP). Confers resistance to bacitracin.</text>
</comment>
<comment type="catalytic activity">
    <reaction evidence="1">
        <text>di-trans,octa-cis-undecaprenyl diphosphate + H2O = di-trans,octa-cis-undecaprenyl phosphate + phosphate + H(+)</text>
        <dbReference type="Rhea" id="RHEA:28094"/>
        <dbReference type="ChEBI" id="CHEBI:15377"/>
        <dbReference type="ChEBI" id="CHEBI:15378"/>
        <dbReference type="ChEBI" id="CHEBI:43474"/>
        <dbReference type="ChEBI" id="CHEBI:58405"/>
        <dbReference type="ChEBI" id="CHEBI:60392"/>
        <dbReference type="EC" id="3.6.1.27"/>
    </reaction>
</comment>
<comment type="subcellular location">
    <subcellularLocation>
        <location evidence="1">Cell inner membrane</location>
        <topology evidence="1">Multi-pass membrane protein</topology>
    </subcellularLocation>
</comment>
<comment type="miscellaneous">
    <text>Bacitracin is thought to be involved in the inhibition of peptidoglycan synthesis by sequestering undecaprenyl diphosphate, thereby reducing the pool of lipid carrier available.</text>
</comment>
<comment type="similarity">
    <text evidence="1">Belongs to the UppP family.</text>
</comment>
<proteinExistence type="inferred from homology"/>
<feature type="chain" id="PRO_1000062812" description="Undecaprenyl-diphosphatase">
    <location>
        <begin position="1"/>
        <end position="266"/>
    </location>
</feature>
<feature type="transmembrane region" description="Helical" evidence="1">
    <location>
        <begin position="1"/>
        <end position="21"/>
    </location>
</feature>
<feature type="transmembrane region" description="Helical" evidence="1">
    <location>
        <begin position="39"/>
        <end position="59"/>
    </location>
</feature>
<feature type="transmembrane region" description="Helical" evidence="1">
    <location>
        <begin position="87"/>
        <end position="107"/>
    </location>
</feature>
<feature type="transmembrane region" description="Helical" evidence="1">
    <location>
        <begin position="114"/>
        <end position="134"/>
    </location>
</feature>
<feature type="transmembrane region" description="Helical" evidence="1">
    <location>
        <begin position="149"/>
        <end position="169"/>
    </location>
</feature>
<feature type="transmembrane region" description="Helical" evidence="1">
    <location>
        <begin position="183"/>
        <end position="203"/>
    </location>
</feature>
<feature type="transmembrane region" description="Helical" evidence="1">
    <location>
        <begin position="218"/>
        <end position="238"/>
    </location>
</feature>
<feature type="transmembrane region" description="Helical" evidence="1">
    <location>
        <begin position="246"/>
        <end position="266"/>
    </location>
</feature>
<dbReference type="EC" id="3.6.1.27" evidence="1"/>
<dbReference type="EMBL" id="CP000563">
    <property type="protein sequence ID" value="ABN60671.1"/>
    <property type="molecule type" value="Genomic_DNA"/>
</dbReference>
<dbReference type="RefSeq" id="WP_006080730.1">
    <property type="nucleotide sequence ID" value="NC_009052.1"/>
</dbReference>
<dbReference type="SMR" id="A3D1Q8"/>
<dbReference type="STRING" id="325240.Sbal_1152"/>
<dbReference type="KEGG" id="sbl:Sbal_1152"/>
<dbReference type="HOGENOM" id="CLU_060296_1_0_6"/>
<dbReference type="OrthoDB" id="9808289at2"/>
<dbReference type="Proteomes" id="UP000001557">
    <property type="component" value="Chromosome"/>
</dbReference>
<dbReference type="GO" id="GO:0005886">
    <property type="term" value="C:plasma membrane"/>
    <property type="evidence" value="ECO:0007669"/>
    <property type="project" value="UniProtKB-SubCell"/>
</dbReference>
<dbReference type="GO" id="GO:0050380">
    <property type="term" value="F:undecaprenyl-diphosphatase activity"/>
    <property type="evidence" value="ECO:0007669"/>
    <property type="project" value="UniProtKB-UniRule"/>
</dbReference>
<dbReference type="GO" id="GO:0071555">
    <property type="term" value="P:cell wall organization"/>
    <property type="evidence" value="ECO:0007669"/>
    <property type="project" value="UniProtKB-KW"/>
</dbReference>
<dbReference type="GO" id="GO:0009252">
    <property type="term" value="P:peptidoglycan biosynthetic process"/>
    <property type="evidence" value="ECO:0007669"/>
    <property type="project" value="UniProtKB-KW"/>
</dbReference>
<dbReference type="GO" id="GO:0008360">
    <property type="term" value="P:regulation of cell shape"/>
    <property type="evidence" value="ECO:0007669"/>
    <property type="project" value="UniProtKB-KW"/>
</dbReference>
<dbReference type="GO" id="GO:0046677">
    <property type="term" value="P:response to antibiotic"/>
    <property type="evidence" value="ECO:0007669"/>
    <property type="project" value="UniProtKB-UniRule"/>
</dbReference>
<dbReference type="HAMAP" id="MF_01006">
    <property type="entry name" value="Undec_diphosphatase"/>
    <property type="match status" value="1"/>
</dbReference>
<dbReference type="InterPro" id="IPR003824">
    <property type="entry name" value="UppP"/>
</dbReference>
<dbReference type="NCBIfam" id="NF001393">
    <property type="entry name" value="PRK00281.2-4"/>
    <property type="match status" value="1"/>
</dbReference>
<dbReference type="NCBIfam" id="TIGR00753">
    <property type="entry name" value="undec_PP_bacA"/>
    <property type="match status" value="1"/>
</dbReference>
<dbReference type="PANTHER" id="PTHR30622">
    <property type="entry name" value="UNDECAPRENYL-DIPHOSPHATASE"/>
    <property type="match status" value="1"/>
</dbReference>
<dbReference type="PANTHER" id="PTHR30622:SF4">
    <property type="entry name" value="UNDECAPRENYL-DIPHOSPHATASE"/>
    <property type="match status" value="1"/>
</dbReference>
<dbReference type="Pfam" id="PF02673">
    <property type="entry name" value="BacA"/>
    <property type="match status" value="1"/>
</dbReference>
<gene>
    <name evidence="1" type="primary">uppP</name>
    <name type="ordered locus">Sbal_1152</name>
</gene>
<reference key="1">
    <citation type="submission" date="2007-02" db="EMBL/GenBank/DDBJ databases">
        <title>Complete sequence of chromosome of Shewanella baltica OS155.</title>
        <authorList>
            <consortium name="US DOE Joint Genome Institute"/>
            <person name="Copeland A."/>
            <person name="Lucas S."/>
            <person name="Lapidus A."/>
            <person name="Barry K."/>
            <person name="Detter J.C."/>
            <person name="Glavina del Rio T."/>
            <person name="Hammon N."/>
            <person name="Israni S."/>
            <person name="Dalin E."/>
            <person name="Tice H."/>
            <person name="Pitluck S."/>
            <person name="Sims D.R."/>
            <person name="Brettin T."/>
            <person name="Bruce D."/>
            <person name="Han C."/>
            <person name="Tapia R."/>
            <person name="Brainard J."/>
            <person name="Schmutz J."/>
            <person name="Larimer F."/>
            <person name="Land M."/>
            <person name="Hauser L."/>
            <person name="Kyrpides N."/>
            <person name="Mikhailova N."/>
            <person name="Brettar I."/>
            <person name="Klappenbach J."/>
            <person name="Konstantinidis K."/>
            <person name="Rodrigues J."/>
            <person name="Tiedje J."/>
            <person name="Richardson P."/>
        </authorList>
    </citation>
    <scope>NUCLEOTIDE SEQUENCE [LARGE SCALE GENOMIC DNA]</scope>
    <source>
        <strain>OS155 / ATCC BAA-1091</strain>
    </source>
</reference>
<evidence type="ECO:0000255" key="1">
    <source>
        <dbReference type="HAMAP-Rule" id="MF_01006"/>
    </source>
</evidence>
<organism>
    <name type="scientific">Shewanella baltica (strain OS155 / ATCC BAA-1091)</name>
    <dbReference type="NCBI Taxonomy" id="325240"/>
    <lineage>
        <taxon>Bacteria</taxon>
        <taxon>Pseudomonadati</taxon>
        <taxon>Pseudomonadota</taxon>
        <taxon>Gammaproteobacteria</taxon>
        <taxon>Alteromonadales</taxon>
        <taxon>Shewanellaceae</taxon>
        <taxon>Shewanella</taxon>
    </lineage>
</organism>
<keyword id="KW-0046">Antibiotic resistance</keyword>
<keyword id="KW-0997">Cell inner membrane</keyword>
<keyword id="KW-1003">Cell membrane</keyword>
<keyword id="KW-0133">Cell shape</keyword>
<keyword id="KW-0961">Cell wall biogenesis/degradation</keyword>
<keyword id="KW-0378">Hydrolase</keyword>
<keyword id="KW-0472">Membrane</keyword>
<keyword id="KW-0573">Peptidoglycan synthesis</keyword>
<keyword id="KW-1185">Reference proteome</keyword>
<keyword id="KW-0812">Transmembrane</keyword>
<keyword id="KW-1133">Transmembrane helix</keyword>
<sequence>MDTFQVIILALIQGLTEFLPISSSAHLILPAQLLGWEDQGLSFDVAVNTGSLFAVVIYFRHELWTMFNAWIASIFRGQQSEDSKLAWWIILATLPAVFFGFLAKDFIATHLRNAEVIAVTTVVFGLLLWWADKMSRRDLTVYQTGWRKALLIGFAQALALIPGTSRSGATMTAALMLGLSRDAAARFSFLMSVPVSLGAAILVGKDLAKSELPIDYQALILGTLISFVAAYACIHYFLKIISRMGMTPFVIYRLALGAVLCGFIFF</sequence>
<name>UPPP_SHEB5</name>
<accession>A3D1Q8</accession>
<protein>
    <recommendedName>
        <fullName evidence="1">Undecaprenyl-diphosphatase</fullName>
        <ecNumber evidence="1">3.6.1.27</ecNumber>
    </recommendedName>
    <alternativeName>
        <fullName evidence="1">Bacitracin resistance protein</fullName>
    </alternativeName>
    <alternativeName>
        <fullName evidence="1">Undecaprenyl pyrophosphate phosphatase</fullName>
    </alternativeName>
</protein>